<comment type="function">
    <text evidence="1">RNA-binding protein that may be involved in the regulation of pre-mRNA alternative splicing.</text>
</comment>
<comment type="subcellular location">
    <subcellularLocation>
        <location evidence="1">Nucleus</location>
    </subcellularLocation>
    <subcellularLocation>
        <location evidence="1">Cytoplasm</location>
    </subcellularLocation>
</comment>
<comment type="similarity">
    <text evidence="3">Belongs to the CELF/BRUNOL family.</text>
</comment>
<dbReference type="EMBL" id="AB032725">
    <property type="protein sequence ID" value="BAA95118.1"/>
    <property type="molecule type" value="mRNA"/>
</dbReference>
<dbReference type="EMBL" id="BX248499">
    <property type="protein sequence ID" value="CAK04904.1"/>
    <property type="molecule type" value="Genomic_DNA"/>
</dbReference>
<dbReference type="EMBL" id="BC060923">
    <property type="protein sequence ID" value="AAH60923.1"/>
    <property type="molecule type" value="mRNA"/>
</dbReference>
<dbReference type="RefSeq" id="NP_571569.2">
    <property type="nucleotide sequence ID" value="NM_131494.2"/>
</dbReference>
<dbReference type="SMR" id="Q9IBD1"/>
<dbReference type="FunCoup" id="Q9IBD1">
    <property type="interactions" value="54"/>
</dbReference>
<dbReference type="STRING" id="7955.ENSDARP00000039628"/>
<dbReference type="PaxDb" id="7955-ENSDARP00000039628"/>
<dbReference type="Ensembl" id="ENSDART00000039629">
    <property type="protein sequence ID" value="ENSDARP00000039628"/>
    <property type="gene ID" value="ENSDARG00000034668"/>
</dbReference>
<dbReference type="Ensembl" id="ENSDART00000193951">
    <property type="protein sequence ID" value="ENSDARP00000153718"/>
    <property type="gene ID" value="ENSDARG00000034668"/>
</dbReference>
<dbReference type="GeneID" id="57922"/>
<dbReference type="KEGG" id="dre:57922"/>
<dbReference type="AGR" id="ZFIN:ZDB-GENE-000501-2"/>
<dbReference type="CTD" id="57922"/>
<dbReference type="ZFIN" id="ZDB-GENE-000501-2">
    <property type="gene designation" value="celf3a"/>
</dbReference>
<dbReference type="eggNOG" id="KOG0146">
    <property type="taxonomic scope" value="Eukaryota"/>
</dbReference>
<dbReference type="HOGENOM" id="CLU_015367_0_1_1"/>
<dbReference type="InParanoid" id="Q9IBD1"/>
<dbReference type="OMA" id="HAYQGTG"/>
<dbReference type="OrthoDB" id="410044at2759"/>
<dbReference type="PhylomeDB" id="Q9IBD1"/>
<dbReference type="TreeFam" id="TF314924"/>
<dbReference type="PRO" id="PR:Q9IBD1"/>
<dbReference type="Proteomes" id="UP000000437">
    <property type="component" value="Chromosome 19"/>
</dbReference>
<dbReference type="Bgee" id="ENSDARG00000034668">
    <property type="expression patterns" value="Expressed in camera-type eye and 23 other cell types or tissues"/>
</dbReference>
<dbReference type="GO" id="GO:0005737">
    <property type="term" value="C:cytoplasm"/>
    <property type="evidence" value="ECO:0000318"/>
    <property type="project" value="GO_Central"/>
</dbReference>
<dbReference type="GO" id="GO:0005634">
    <property type="term" value="C:nucleus"/>
    <property type="evidence" value="ECO:0000318"/>
    <property type="project" value="GO_Central"/>
</dbReference>
<dbReference type="GO" id="GO:1990904">
    <property type="term" value="C:ribonucleoprotein complex"/>
    <property type="evidence" value="ECO:0000318"/>
    <property type="project" value="GO_Central"/>
</dbReference>
<dbReference type="GO" id="GO:0003729">
    <property type="term" value="F:mRNA binding"/>
    <property type="evidence" value="ECO:0000318"/>
    <property type="project" value="GO_Central"/>
</dbReference>
<dbReference type="GO" id="GO:0006376">
    <property type="term" value="P:mRNA splice site recognition"/>
    <property type="evidence" value="ECO:0000318"/>
    <property type="project" value="GO_Central"/>
</dbReference>
<dbReference type="GO" id="GO:0048026">
    <property type="term" value="P:positive regulation of mRNA splicing, via spliceosome"/>
    <property type="evidence" value="ECO:0000250"/>
    <property type="project" value="UniProtKB"/>
</dbReference>
<dbReference type="GO" id="GO:0000381">
    <property type="term" value="P:regulation of alternative mRNA splicing, via spliceosome"/>
    <property type="evidence" value="ECO:0000318"/>
    <property type="project" value="GO_Central"/>
</dbReference>
<dbReference type="CDD" id="cd12632">
    <property type="entry name" value="RRM1_CELF3_4_5_6"/>
    <property type="match status" value="1"/>
</dbReference>
<dbReference type="CDD" id="cd12635">
    <property type="entry name" value="RRM2_CELF3_4_5_6"/>
    <property type="match status" value="1"/>
</dbReference>
<dbReference type="CDD" id="cd12639">
    <property type="entry name" value="RRM3_CELF3_4_5_6"/>
    <property type="match status" value="1"/>
</dbReference>
<dbReference type="FunFam" id="3.30.70.330:FF:000007">
    <property type="entry name" value="CUGBP Elav-like family member 4 isoform 3"/>
    <property type="match status" value="1"/>
</dbReference>
<dbReference type="FunFam" id="3.30.70.330:FF:000010">
    <property type="entry name" value="CUGBP Elav-like family member 4 isoform 3"/>
    <property type="match status" value="1"/>
</dbReference>
<dbReference type="FunFam" id="3.30.70.330:FF:000148">
    <property type="entry name" value="Putative CUGBP Elav-like family member 3"/>
    <property type="match status" value="1"/>
</dbReference>
<dbReference type="Gene3D" id="3.30.70.330">
    <property type="match status" value="3"/>
</dbReference>
<dbReference type="InterPro" id="IPR034648">
    <property type="entry name" value="CELF3/4/5/6_RRM1"/>
</dbReference>
<dbReference type="InterPro" id="IPR012677">
    <property type="entry name" value="Nucleotide-bd_a/b_plait_sf"/>
</dbReference>
<dbReference type="InterPro" id="IPR035979">
    <property type="entry name" value="RBD_domain_sf"/>
</dbReference>
<dbReference type="InterPro" id="IPR000504">
    <property type="entry name" value="RRM_dom"/>
</dbReference>
<dbReference type="PANTHER" id="PTHR24012">
    <property type="entry name" value="RNA BINDING PROTEIN"/>
    <property type="match status" value="1"/>
</dbReference>
<dbReference type="Pfam" id="PF00076">
    <property type="entry name" value="RRM_1"/>
    <property type="match status" value="3"/>
</dbReference>
<dbReference type="SMART" id="SM00360">
    <property type="entry name" value="RRM"/>
    <property type="match status" value="3"/>
</dbReference>
<dbReference type="SUPFAM" id="SSF54928">
    <property type="entry name" value="RNA-binding domain, RBD"/>
    <property type="match status" value="2"/>
</dbReference>
<dbReference type="PROSITE" id="PS50102">
    <property type="entry name" value="RRM"/>
    <property type="match status" value="3"/>
</dbReference>
<accession>Q9IBD1</accession>
<accession>Q6P953</accession>
<gene>
    <name type="primary">celf3</name>
    <name type="synonym">etr1</name>
    <name type="synonym">tnrc4</name>
</gene>
<name>CELF3_DANRE</name>
<sequence>MKEADAIKLFIGQIPRNLEEKDLKPIFEQFGKIYELTVIKDKYTGMHKGCAFLTYCARESALKAQNALHEQKTLPGMNRPIQVKPADSEGRGDRKLFVGMLGKQLSDADVRKMFEPFGSIEECTVLRGPDGASKGCAFVKYQSNAEAQAAISALHGSRTLPGASSSLVVKFADTEKERGIRRMQQVASQLGVISPMSLHLGAYNAYTQALVQQQALVAQSAYLSPVATVAAVQMQQLAALNPSSIIATPIASITPSSGTSTPPTIAATPVPALPPPIAVNSYPPVPAAPNGQSASEALYTNGVHPYQAQSPALDPLQQAYTGMQHYTATYPAAYGLVGQPFPHQPTLVAQQPQQPQQLQQREGPEGCNIFIYHLPQEFTDSEMLQMFLPFGNVISAKVFVDRATNQSKCFGFVSFDNPASAQAAIQAMNGFQIGMKRLKVQLKRPKDANRPY</sequence>
<proteinExistence type="evidence at transcript level"/>
<evidence type="ECO:0000250" key="1"/>
<evidence type="ECO:0000255" key="2">
    <source>
        <dbReference type="PROSITE-ProRule" id="PRU00176"/>
    </source>
</evidence>
<evidence type="ECO:0000305" key="3"/>
<protein>
    <recommendedName>
        <fullName>CUGBP Elav-like family member 3</fullName>
        <shortName>CELF-3</shortName>
    </recommendedName>
    <alternativeName>
        <fullName>Bruno-like protein 1</fullName>
    </alternativeName>
    <alternativeName>
        <fullName>CUG-BP- and ETR-3-like factor 3</fullName>
    </alternativeName>
    <alternativeName>
        <fullName>ELAV-type RNA-binding protein 1</fullName>
        <shortName>ETR-1</shortName>
    </alternativeName>
    <alternativeName>
        <fullName>RNA-binding protein BRUNOL-1</fullName>
    </alternativeName>
    <alternativeName>
        <fullName>Trinucleotide repeat-containing gene 4 protein</fullName>
    </alternativeName>
</protein>
<feature type="chain" id="PRO_0000295218" description="CUGBP Elav-like family member 3">
    <location>
        <begin position="1"/>
        <end position="452"/>
    </location>
</feature>
<feature type="domain" description="RRM 1" evidence="2">
    <location>
        <begin position="7"/>
        <end position="88"/>
    </location>
</feature>
<feature type="domain" description="RRM 2" evidence="2">
    <location>
        <begin position="94"/>
        <end position="174"/>
    </location>
</feature>
<feature type="domain" description="RRM 3" evidence="2">
    <location>
        <begin position="367"/>
        <end position="445"/>
    </location>
</feature>
<feature type="sequence conflict" description="In Ref. 1; BAA95118." evidence="3" ref="1">
    <original>S</original>
    <variation>N</variation>
    <location>
        <position position="197"/>
    </location>
</feature>
<keyword id="KW-0963">Cytoplasm</keyword>
<keyword id="KW-0507">mRNA processing</keyword>
<keyword id="KW-0539">Nucleus</keyword>
<keyword id="KW-1185">Reference proteome</keyword>
<keyword id="KW-0677">Repeat</keyword>
<keyword id="KW-0694">RNA-binding</keyword>
<reference key="1">
    <citation type="journal article" date="2000" name="Mech. Dev.">
        <title>Vegetal localization of the maternal mRNA encoding an EDEN-BP/Bruno-like protein in zebrafish.</title>
        <authorList>
            <person name="Suzuki H."/>
            <person name="Maegawa S."/>
            <person name="Nishibu T."/>
            <person name="Sugiyama T."/>
            <person name="Yasuda K."/>
            <person name="Inoue K."/>
        </authorList>
    </citation>
    <scope>NUCLEOTIDE SEQUENCE [MRNA]</scope>
</reference>
<reference key="2">
    <citation type="journal article" date="2013" name="Nature">
        <title>The zebrafish reference genome sequence and its relationship to the human genome.</title>
        <authorList>
            <person name="Howe K."/>
            <person name="Clark M.D."/>
            <person name="Torroja C.F."/>
            <person name="Torrance J."/>
            <person name="Berthelot C."/>
            <person name="Muffato M."/>
            <person name="Collins J.E."/>
            <person name="Humphray S."/>
            <person name="McLaren K."/>
            <person name="Matthews L."/>
            <person name="McLaren S."/>
            <person name="Sealy I."/>
            <person name="Caccamo M."/>
            <person name="Churcher C."/>
            <person name="Scott C."/>
            <person name="Barrett J.C."/>
            <person name="Koch R."/>
            <person name="Rauch G.J."/>
            <person name="White S."/>
            <person name="Chow W."/>
            <person name="Kilian B."/>
            <person name="Quintais L.T."/>
            <person name="Guerra-Assuncao J.A."/>
            <person name="Zhou Y."/>
            <person name="Gu Y."/>
            <person name="Yen J."/>
            <person name="Vogel J.H."/>
            <person name="Eyre T."/>
            <person name="Redmond S."/>
            <person name="Banerjee R."/>
            <person name="Chi J."/>
            <person name="Fu B."/>
            <person name="Langley E."/>
            <person name="Maguire S.F."/>
            <person name="Laird G.K."/>
            <person name="Lloyd D."/>
            <person name="Kenyon E."/>
            <person name="Donaldson S."/>
            <person name="Sehra H."/>
            <person name="Almeida-King J."/>
            <person name="Loveland J."/>
            <person name="Trevanion S."/>
            <person name="Jones M."/>
            <person name="Quail M."/>
            <person name="Willey D."/>
            <person name="Hunt A."/>
            <person name="Burton J."/>
            <person name="Sims S."/>
            <person name="McLay K."/>
            <person name="Plumb B."/>
            <person name="Davis J."/>
            <person name="Clee C."/>
            <person name="Oliver K."/>
            <person name="Clark R."/>
            <person name="Riddle C."/>
            <person name="Elliot D."/>
            <person name="Threadgold G."/>
            <person name="Harden G."/>
            <person name="Ware D."/>
            <person name="Begum S."/>
            <person name="Mortimore B."/>
            <person name="Kerry G."/>
            <person name="Heath P."/>
            <person name="Phillimore B."/>
            <person name="Tracey A."/>
            <person name="Corby N."/>
            <person name="Dunn M."/>
            <person name="Johnson C."/>
            <person name="Wood J."/>
            <person name="Clark S."/>
            <person name="Pelan S."/>
            <person name="Griffiths G."/>
            <person name="Smith M."/>
            <person name="Glithero R."/>
            <person name="Howden P."/>
            <person name="Barker N."/>
            <person name="Lloyd C."/>
            <person name="Stevens C."/>
            <person name="Harley J."/>
            <person name="Holt K."/>
            <person name="Panagiotidis G."/>
            <person name="Lovell J."/>
            <person name="Beasley H."/>
            <person name="Henderson C."/>
            <person name="Gordon D."/>
            <person name="Auger K."/>
            <person name="Wright D."/>
            <person name="Collins J."/>
            <person name="Raisen C."/>
            <person name="Dyer L."/>
            <person name="Leung K."/>
            <person name="Robertson L."/>
            <person name="Ambridge K."/>
            <person name="Leongamornlert D."/>
            <person name="McGuire S."/>
            <person name="Gilderthorp R."/>
            <person name="Griffiths C."/>
            <person name="Manthravadi D."/>
            <person name="Nichol S."/>
            <person name="Barker G."/>
            <person name="Whitehead S."/>
            <person name="Kay M."/>
            <person name="Brown J."/>
            <person name="Murnane C."/>
            <person name="Gray E."/>
            <person name="Humphries M."/>
            <person name="Sycamore N."/>
            <person name="Barker D."/>
            <person name="Saunders D."/>
            <person name="Wallis J."/>
            <person name="Babbage A."/>
            <person name="Hammond S."/>
            <person name="Mashreghi-Mohammadi M."/>
            <person name="Barr L."/>
            <person name="Martin S."/>
            <person name="Wray P."/>
            <person name="Ellington A."/>
            <person name="Matthews N."/>
            <person name="Ellwood M."/>
            <person name="Woodmansey R."/>
            <person name="Clark G."/>
            <person name="Cooper J."/>
            <person name="Tromans A."/>
            <person name="Grafham D."/>
            <person name="Skuce C."/>
            <person name="Pandian R."/>
            <person name="Andrews R."/>
            <person name="Harrison E."/>
            <person name="Kimberley A."/>
            <person name="Garnett J."/>
            <person name="Fosker N."/>
            <person name="Hall R."/>
            <person name="Garner P."/>
            <person name="Kelly D."/>
            <person name="Bird C."/>
            <person name="Palmer S."/>
            <person name="Gehring I."/>
            <person name="Berger A."/>
            <person name="Dooley C.M."/>
            <person name="Ersan-Urun Z."/>
            <person name="Eser C."/>
            <person name="Geiger H."/>
            <person name="Geisler M."/>
            <person name="Karotki L."/>
            <person name="Kirn A."/>
            <person name="Konantz J."/>
            <person name="Konantz M."/>
            <person name="Oberlander M."/>
            <person name="Rudolph-Geiger S."/>
            <person name="Teucke M."/>
            <person name="Lanz C."/>
            <person name="Raddatz G."/>
            <person name="Osoegawa K."/>
            <person name="Zhu B."/>
            <person name="Rapp A."/>
            <person name="Widaa S."/>
            <person name="Langford C."/>
            <person name="Yang F."/>
            <person name="Schuster S.C."/>
            <person name="Carter N.P."/>
            <person name="Harrow J."/>
            <person name="Ning Z."/>
            <person name="Herrero J."/>
            <person name="Searle S.M."/>
            <person name="Enright A."/>
            <person name="Geisler R."/>
            <person name="Plasterk R.H."/>
            <person name="Lee C."/>
            <person name="Westerfield M."/>
            <person name="de Jong P.J."/>
            <person name="Zon L.I."/>
            <person name="Postlethwait J.H."/>
            <person name="Nusslein-Volhard C."/>
            <person name="Hubbard T.J."/>
            <person name="Roest Crollius H."/>
            <person name="Rogers J."/>
            <person name="Stemple D.L."/>
        </authorList>
    </citation>
    <scope>NUCLEOTIDE SEQUENCE [LARGE SCALE GENOMIC DNA]</scope>
    <source>
        <strain>Tuebingen</strain>
    </source>
</reference>
<reference key="3">
    <citation type="submission" date="2003-11" db="EMBL/GenBank/DDBJ databases">
        <authorList>
            <consortium name="NIH - Zebrafish Gene Collection (ZGC) project"/>
        </authorList>
    </citation>
    <scope>NUCLEOTIDE SEQUENCE [LARGE SCALE MRNA]</scope>
    <source>
        <tissue>Retina</tissue>
    </source>
</reference>
<organism>
    <name type="scientific">Danio rerio</name>
    <name type="common">Zebrafish</name>
    <name type="synonym">Brachydanio rerio</name>
    <dbReference type="NCBI Taxonomy" id="7955"/>
    <lineage>
        <taxon>Eukaryota</taxon>
        <taxon>Metazoa</taxon>
        <taxon>Chordata</taxon>
        <taxon>Craniata</taxon>
        <taxon>Vertebrata</taxon>
        <taxon>Euteleostomi</taxon>
        <taxon>Actinopterygii</taxon>
        <taxon>Neopterygii</taxon>
        <taxon>Teleostei</taxon>
        <taxon>Ostariophysi</taxon>
        <taxon>Cypriniformes</taxon>
        <taxon>Danionidae</taxon>
        <taxon>Danioninae</taxon>
        <taxon>Danio</taxon>
    </lineage>
</organism>